<comment type="function">
    <text evidence="1">Produces ATP from ADP in the presence of a proton gradient across the membrane. The alpha chain is a regulatory subunit.</text>
</comment>
<comment type="catalytic activity">
    <reaction evidence="1">
        <text>ATP + H2O + 4 H(+)(in) = ADP + phosphate + 5 H(+)(out)</text>
        <dbReference type="Rhea" id="RHEA:57720"/>
        <dbReference type="ChEBI" id="CHEBI:15377"/>
        <dbReference type="ChEBI" id="CHEBI:15378"/>
        <dbReference type="ChEBI" id="CHEBI:30616"/>
        <dbReference type="ChEBI" id="CHEBI:43474"/>
        <dbReference type="ChEBI" id="CHEBI:456216"/>
        <dbReference type="EC" id="7.1.2.2"/>
    </reaction>
</comment>
<comment type="subunit">
    <text evidence="1">F-type ATPases have 2 components, CF(1) - the catalytic core - and CF(0) - the membrane proton channel. CF(1) has five subunits: alpha(3), beta(3), gamma(1), delta(1), epsilon(1). CF(0) has three main subunits: a(1), b(2) and c(9-12). The alpha and beta chains form an alternating ring which encloses part of the gamma chain. CF(1) is attached to CF(0) by a central stalk formed by the gamma and epsilon chains, while a peripheral stalk is formed by the delta and b chains.</text>
</comment>
<comment type="subcellular location">
    <subcellularLocation>
        <location evidence="1">Cell inner membrane</location>
        <topology evidence="1">Peripheral membrane protein</topology>
    </subcellularLocation>
</comment>
<comment type="similarity">
    <text evidence="1">Belongs to the ATPase alpha/beta chains family.</text>
</comment>
<sequence length="513" mass="55284">MQLNSTEISELIKKRIAQFNVVSEAQSTGTIVSVSDGVIRIHGLADVMQGEMIALPGNRYAIALNLERDSVGAVVMGPYADLAEGMEVKCTGRILEVPVGRGLLGRVVNTLGQPIDGKGEIDNDGFSPIEVIAPGVIDRQSVDQPVQTGYKAVDSMVPIGRGQRELIIGDRQTGKTALAIDAIINQRDSGIKCIYVAIGQKASTISNVVRKLEEHGALQNTIVVVASASESAALQYLAPYAGCAMGEYFRDRGEDALIVYDDLSKQAVAYRQISLLLRRPPGREAYPGDVFYLHSRLLERAARVNADYVERFTNGAVKGQTGSLTALPIIETQAGDVSAFVPTNVISITDGQIFLETSFFNAGIRPAVNPGISVSRVGGSAQTKLVKKLAGGIRTALAQYRELAAFAQFASDLDDATRKQLSHGQKVTELLKQKQFEPMSVAQLGLSLAAAEFGYLDDVEVERVGSFESNLLAYANANYAEFMKDLSKSGDFNDTIKAKLIEILDSFKKNSAW</sequence>
<reference key="1">
    <citation type="journal article" date="2009" name="J. Bacteriol.">
        <title>Complete genome sequence of Haemophilus parasuis SH0165.</title>
        <authorList>
            <person name="Yue M."/>
            <person name="Yang F."/>
            <person name="Yang J."/>
            <person name="Bei W."/>
            <person name="Cai X."/>
            <person name="Chen L."/>
            <person name="Dong J."/>
            <person name="Zhou R."/>
            <person name="Jin M."/>
            <person name="Jin Q."/>
            <person name="Chen H."/>
        </authorList>
    </citation>
    <scope>NUCLEOTIDE SEQUENCE [LARGE SCALE GENOMIC DNA]</scope>
    <source>
        <strain>SH0165</strain>
    </source>
</reference>
<organism>
    <name type="scientific">Glaesserella parasuis serovar 5 (strain SH0165)</name>
    <name type="common">Haemophilus parasuis</name>
    <dbReference type="NCBI Taxonomy" id="557723"/>
    <lineage>
        <taxon>Bacteria</taxon>
        <taxon>Pseudomonadati</taxon>
        <taxon>Pseudomonadota</taxon>
        <taxon>Gammaproteobacteria</taxon>
        <taxon>Pasteurellales</taxon>
        <taxon>Pasteurellaceae</taxon>
        <taxon>Glaesserella</taxon>
    </lineage>
</organism>
<protein>
    <recommendedName>
        <fullName evidence="1">ATP synthase subunit alpha</fullName>
        <ecNumber evidence="1">7.1.2.2</ecNumber>
    </recommendedName>
    <alternativeName>
        <fullName evidence="1">ATP synthase F1 sector subunit alpha</fullName>
    </alternativeName>
    <alternativeName>
        <fullName evidence="1">F-ATPase subunit alpha</fullName>
    </alternativeName>
</protein>
<proteinExistence type="inferred from homology"/>
<feature type="chain" id="PRO_1000166541" description="ATP synthase subunit alpha">
    <location>
        <begin position="1"/>
        <end position="513"/>
    </location>
</feature>
<feature type="binding site" evidence="1">
    <location>
        <begin position="169"/>
        <end position="176"/>
    </location>
    <ligand>
        <name>ATP</name>
        <dbReference type="ChEBI" id="CHEBI:30616"/>
    </ligand>
</feature>
<feature type="site" description="Required for activity" evidence="1">
    <location>
        <position position="373"/>
    </location>
</feature>
<accession>B8F772</accession>
<name>ATPA_GLAP5</name>
<gene>
    <name evidence="1" type="primary">atpA</name>
    <name type="ordered locus">HAPS_1624</name>
</gene>
<keyword id="KW-0066">ATP synthesis</keyword>
<keyword id="KW-0067">ATP-binding</keyword>
<keyword id="KW-0997">Cell inner membrane</keyword>
<keyword id="KW-1003">Cell membrane</keyword>
<keyword id="KW-0139">CF(1)</keyword>
<keyword id="KW-0375">Hydrogen ion transport</keyword>
<keyword id="KW-0406">Ion transport</keyword>
<keyword id="KW-0472">Membrane</keyword>
<keyword id="KW-0547">Nucleotide-binding</keyword>
<keyword id="KW-1185">Reference proteome</keyword>
<keyword id="KW-1278">Translocase</keyword>
<keyword id="KW-0813">Transport</keyword>
<dbReference type="EC" id="7.1.2.2" evidence="1"/>
<dbReference type="EMBL" id="CP001321">
    <property type="protein sequence ID" value="ACL33174.1"/>
    <property type="molecule type" value="Genomic_DNA"/>
</dbReference>
<dbReference type="RefSeq" id="WP_005713634.1">
    <property type="nucleotide sequence ID" value="NC_011852.1"/>
</dbReference>
<dbReference type="SMR" id="B8F772"/>
<dbReference type="STRING" id="557723.HAPS_1624"/>
<dbReference type="GeneID" id="66619868"/>
<dbReference type="KEGG" id="hap:HAPS_1624"/>
<dbReference type="HOGENOM" id="CLU_010091_2_1_6"/>
<dbReference type="Proteomes" id="UP000006743">
    <property type="component" value="Chromosome"/>
</dbReference>
<dbReference type="GO" id="GO:0005886">
    <property type="term" value="C:plasma membrane"/>
    <property type="evidence" value="ECO:0007669"/>
    <property type="project" value="UniProtKB-SubCell"/>
</dbReference>
<dbReference type="GO" id="GO:0045259">
    <property type="term" value="C:proton-transporting ATP synthase complex"/>
    <property type="evidence" value="ECO:0007669"/>
    <property type="project" value="UniProtKB-KW"/>
</dbReference>
<dbReference type="GO" id="GO:0043531">
    <property type="term" value="F:ADP binding"/>
    <property type="evidence" value="ECO:0007669"/>
    <property type="project" value="TreeGrafter"/>
</dbReference>
<dbReference type="GO" id="GO:0005524">
    <property type="term" value="F:ATP binding"/>
    <property type="evidence" value="ECO:0007669"/>
    <property type="project" value="UniProtKB-UniRule"/>
</dbReference>
<dbReference type="GO" id="GO:0046933">
    <property type="term" value="F:proton-transporting ATP synthase activity, rotational mechanism"/>
    <property type="evidence" value="ECO:0007669"/>
    <property type="project" value="UniProtKB-UniRule"/>
</dbReference>
<dbReference type="CDD" id="cd18113">
    <property type="entry name" value="ATP-synt_F1_alpha_C"/>
    <property type="match status" value="1"/>
</dbReference>
<dbReference type="CDD" id="cd18116">
    <property type="entry name" value="ATP-synt_F1_alpha_N"/>
    <property type="match status" value="1"/>
</dbReference>
<dbReference type="CDD" id="cd01132">
    <property type="entry name" value="F1-ATPase_alpha_CD"/>
    <property type="match status" value="1"/>
</dbReference>
<dbReference type="FunFam" id="1.20.150.20:FF:000001">
    <property type="entry name" value="ATP synthase subunit alpha"/>
    <property type="match status" value="1"/>
</dbReference>
<dbReference type="FunFam" id="2.40.30.20:FF:000001">
    <property type="entry name" value="ATP synthase subunit alpha"/>
    <property type="match status" value="1"/>
</dbReference>
<dbReference type="FunFam" id="3.40.50.300:FF:000002">
    <property type="entry name" value="ATP synthase subunit alpha"/>
    <property type="match status" value="1"/>
</dbReference>
<dbReference type="Gene3D" id="2.40.30.20">
    <property type="match status" value="1"/>
</dbReference>
<dbReference type="Gene3D" id="1.20.150.20">
    <property type="entry name" value="ATP synthase alpha/beta chain, C-terminal domain"/>
    <property type="match status" value="1"/>
</dbReference>
<dbReference type="Gene3D" id="3.40.50.300">
    <property type="entry name" value="P-loop containing nucleotide triphosphate hydrolases"/>
    <property type="match status" value="1"/>
</dbReference>
<dbReference type="HAMAP" id="MF_01346">
    <property type="entry name" value="ATP_synth_alpha_bact"/>
    <property type="match status" value="1"/>
</dbReference>
<dbReference type="InterPro" id="IPR023366">
    <property type="entry name" value="ATP_synth_asu-like_sf"/>
</dbReference>
<dbReference type="InterPro" id="IPR000793">
    <property type="entry name" value="ATP_synth_asu_C"/>
</dbReference>
<dbReference type="InterPro" id="IPR038376">
    <property type="entry name" value="ATP_synth_asu_C_sf"/>
</dbReference>
<dbReference type="InterPro" id="IPR033732">
    <property type="entry name" value="ATP_synth_F1_a_nt-bd_dom"/>
</dbReference>
<dbReference type="InterPro" id="IPR005294">
    <property type="entry name" value="ATP_synth_F1_asu"/>
</dbReference>
<dbReference type="InterPro" id="IPR020003">
    <property type="entry name" value="ATPase_a/bsu_AS"/>
</dbReference>
<dbReference type="InterPro" id="IPR004100">
    <property type="entry name" value="ATPase_F1/V1/A1_a/bsu_N"/>
</dbReference>
<dbReference type="InterPro" id="IPR036121">
    <property type="entry name" value="ATPase_F1/V1/A1_a/bsu_N_sf"/>
</dbReference>
<dbReference type="InterPro" id="IPR000194">
    <property type="entry name" value="ATPase_F1/V1/A1_a/bsu_nucl-bd"/>
</dbReference>
<dbReference type="InterPro" id="IPR027417">
    <property type="entry name" value="P-loop_NTPase"/>
</dbReference>
<dbReference type="NCBIfam" id="TIGR00962">
    <property type="entry name" value="atpA"/>
    <property type="match status" value="1"/>
</dbReference>
<dbReference type="NCBIfam" id="NF009884">
    <property type="entry name" value="PRK13343.1"/>
    <property type="match status" value="1"/>
</dbReference>
<dbReference type="PANTHER" id="PTHR48082">
    <property type="entry name" value="ATP SYNTHASE SUBUNIT ALPHA, MITOCHONDRIAL"/>
    <property type="match status" value="1"/>
</dbReference>
<dbReference type="PANTHER" id="PTHR48082:SF2">
    <property type="entry name" value="ATP SYNTHASE SUBUNIT ALPHA, MITOCHONDRIAL"/>
    <property type="match status" value="1"/>
</dbReference>
<dbReference type="Pfam" id="PF00006">
    <property type="entry name" value="ATP-synt_ab"/>
    <property type="match status" value="1"/>
</dbReference>
<dbReference type="Pfam" id="PF00306">
    <property type="entry name" value="ATP-synt_ab_C"/>
    <property type="match status" value="1"/>
</dbReference>
<dbReference type="Pfam" id="PF02874">
    <property type="entry name" value="ATP-synt_ab_N"/>
    <property type="match status" value="1"/>
</dbReference>
<dbReference type="SUPFAM" id="SSF47917">
    <property type="entry name" value="C-terminal domain of alpha and beta subunits of F1 ATP synthase"/>
    <property type="match status" value="1"/>
</dbReference>
<dbReference type="SUPFAM" id="SSF50615">
    <property type="entry name" value="N-terminal domain of alpha and beta subunits of F1 ATP synthase"/>
    <property type="match status" value="1"/>
</dbReference>
<dbReference type="SUPFAM" id="SSF52540">
    <property type="entry name" value="P-loop containing nucleoside triphosphate hydrolases"/>
    <property type="match status" value="1"/>
</dbReference>
<dbReference type="PROSITE" id="PS00152">
    <property type="entry name" value="ATPASE_ALPHA_BETA"/>
    <property type="match status" value="1"/>
</dbReference>
<evidence type="ECO:0000255" key="1">
    <source>
        <dbReference type="HAMAP-Rule" id="MF_01346"/>
    </source>
</evidence>